<reference key="1">
    <citation type="journal article" date="2004" name="J. Bacteriol.">
        <title>Complete genome sequence of the genetically tractable hydrogenotrophic methanogen Methanococcus maripaludis.</title>
        <authorList>
            <person name="Hendrickson E.L."/>
            <person name="Kaul R."/>
            <person name="Zhou Y."/>
            <person name="Bovee D."/>
            <person name="Chapman P."/>
            <person name="Chung J."/>
            <person name="Conway de Macario E."/>
            <person name="Dodsworth J.A."/>
            <person name="Gillett W."/>
            <person name="Graham D.E."/>
            <person name="Hackett M."/>
            <person name="Haydock A.K."/>
            <person name="Kang A."/>
            <person name="Land M.L."/>
            <person name="Levy R."/>
            <person name="Lie T.J."/>
            <person name="Major T.A."/>
            <person name="Moore B.C."/>
            <person name="Porat I."/>
            <person name="Palmeiri A."/>
            <person name="Rouse G."/>
            <person name="Saenphimmachak C."/>
            <person name="Soell D."/>
            <person name="Van Dien S."/>
            <person name="Wang T."/>
            <person name="Whitman W.B."/>
            <person name="Xia Q."/>
            <person name="Zhang Y."/>
            <person name="Larimer F.W."/>
            <person name="Olson M.V."/>
            <person name="Leigh J.A."/>
        </authorList>
    </citation>
    <scope>NUCLEOTIDE SEQUENCE [LARGE SCALE GENOMIC DNA]</scope>
    <source>
        <strain>DSM 14266 / JCM 13030 / NBRC 101832 / S2 / LL</strain>
    </source>
</reference>
<proteinExistence type="inferred from homology"/>
<organism>
    <name type="scientific">Methanococcus maripaludis (strain DSM 14266 / JCM 13030 / NBRC 101832 / S2 / LL)</name>
    <dbReference type="NCBI Taxonomy" id="267377"/>
    <lineage>
        <taxon>Archaea</taxon>
        <taxon>Methanobacteriati</taxon>
        <taxon>Methanobacteriota</taxon>
        <taxon>Methanomada group</taxon>
        <taxon>Methanococci</taxon>
        <taxon>Methanococcales</taxon>
        <taxon>Methanococcaceae</taxon>
        <taxon>Methanococcus</taxon>
    </lineage>
</organism>
<dbReference type="EC" id="3.6.1.31" evidence="1"/>
<dbReference type="EMBL" id="BX950229">
    <property type="protein sequence ID" value="CAF29607.1"/>
    <property type="molecule type" value="Genomic_DNA"/>
</dbReference>
<dbReference type="RefSeq" id="WP_011169995.1">
    <property type="nucleotide sequence ID" value="NC_005791.1"/>
</dbReference>
<dbReference type="SMR" id="P62348"/>
<dbReference type="STRING" id="267377.MMP0051"/>
<dbReference type="EnsemblBacteria" id="CAF29607">
    <property type="protein sequence ID" value="CAF29607"/>
    <property type="gene ID" value="MMP0051"/>
</dbReference>
<dbReference type="GeneID" id="41278460"/>
<dbReference type="KEGG" id="mmp:MMP0051"/>
<dbReference type="PATRIC" id="fig|267377.15.peg.52"/>
<dbReference type="eggNOG" id="arCOG02677">
    <property type="taxonomic scope" value="Archaea"/>
</dbReference>
<dbReference type="HOGENOM" id="CLU_123337_0_0_2"/>
<dbReference type="OrthoDB" id="39686at2157"/>
<dbReference type="UniPathway" id="UPA00031">
    <property type="reaction ID" value="UER00007"/>
</dbReference>
<dbReference type="Proteomes" id="UP000000590">
    <property type="component" value="Chromosome"/>
</dbReference>
<dbReference type="GO" id="GO:0005737">
    <property type="term" value="C:cytoplasm"/>
    <property type="evidence" value="ECO:0007669"/>
    <property type="project" value="UniProtKB-SubCell"/>
</dbReference>
<dbReference type="GO" id="GO:0005524">
    <property type="term" value="F:ATP binding"/>
    <property type="evidence" value="ECO:0007669"/>
    <property type="project" value="UniProtKB-KW"/>
</dbReference>
<dbReference type="GO" id="GO:0004636">
    <property type="term" value="F:phosphoribosyl-ATP diphosphatase activity"/>
    <property type="evidence" value="ECO:0007669"/>
    <property type="project" value="UniProtKB-UniRule"/>
</dbReference>
<dbReference type="GO" id="GO:0000105">
    <property type="term" value="P:L-histidine biosynthetic process"/>
    <property type="evidence" value="ECO:0007669"/>
    <property type="project" value="UniProtKB-UniRule"/>
</dbReference>
<dbReference type="CDD" id="cd11534">
    <property type="entry name" value="NTP-PPase_HisIE_like"/>
    <property type="match status" value="1"/>
</dbReference>
<dbReference type="FunFam" id="1.10.287.1080:FF:000002">
    <property type="entry name" value="Histidine biosynthesis bifunctional protein HisIE"/>
    <property type="match status" value="1"/>
</dbReference>
<dbReference type="Gene3D" id="1.10.287.1080">
    <property type="entry name" value="MazG-like"/>
    <property type="match status" value="1"/>
</dbReference>
<dbReference type="HAMAP" id="MF_01020">
    <property type="entry name" value="HisE"/>
    <property type="match status" value="1"/>
</dbReference>
<dbReference type="InterPro" id="IPR008179">
    <property type="entry name" value="HisE"/>
</dbReference>
<dbReference type="InterPro" id="IPR021130">
    <property type="entry name" value="PRib-ATP_PPHydrolase-like"/>
</dbReference>
<dbReference type="NCBIfam" id="TIGR03188">
    <property type="entry name" value="histidine_hisI"/>
    <property type="match status" value="1"/>
</dbReference>
<dbReference type="PANTHER" id="PTHR42945">
    <property type="entry name" value="HISTIDINE BIOSYNTHESIS BIFUNCTIONAL PROTEIN"/>
    <property type="match status" value="1"/>
</dbReference>
<dbReference type="PANTHER" id="PTHR42945:SF9">
    <property type="entry name" value="HISTIDINE BIOSYNTHESIS BIFUNCTIONAL PROTEIN HISIE"/>
    <property type="match status" value="1"/>
</dbReference>
<dbReference type="Pfam" id="PF01503">
    <property type="entry name" value="PRA-PH"/>
    <property type="match status" value="1"/>
</dbReference>
<dbReference type="SUPFAM" id="SSF101386">
    <property type="entry name" value="all-alpha NTP pyrophosphatases"/>
    <property type="match status" value="1"/>
</dbReference>
<accession>P62348</accession>
<sequence>MNVLKEVYATIEKRIEEKPEGSYVAKLTTDDKKTAVNKICEKVGEEAAEVIIAAKDNDKAEIIYESADLIFHTMVLLAKSGITYEELSEEFKKRMK</sequence>
<comment type="catalytic activity">
    <reaction evidence="1">
        <text>1-(5-phospho-beta-D-ribosyl)-ATP + H2O = 1-(5-phospho-beta-D-ribosyl)-5'-AMP + diphosphate + H(+)</text>
        <dbReference type="Rhea" id="RHEA:22828"/>
        <dbReference type="ChEBI" id="CHEBI:15377"/>
        <dbReference type="ChEBI" id="CHEBI:15378"/>
        <dbReference type="ChEBI" id="CHEBI:33019"/>
        <dbReference type="ChEBI" id="CHEBI:59457"/>
        <dbReference type="ChEBI" id="CHEBI:73183"/>
        <dbReference type="EC" id="3.6.1.31"/>
    </reaction>
</comment>
<comment type="pathway">
    <text evidence="1">Amino-acid biosynthesis; L-histidine biosynthesis; L-histidine from 5-phospho-alpha-D-ribose 1-diphosphate: step 2/9.</text>
</comment>
<comment type="subcellular location">
    <subcellularLocation>
        <location evidence="1">Cytoplasm</location>
    </subcellularLocation>
</comment>
<comment type="similarity">
    <text evidence="1">Belongs to the PRA-PH family.</text>
</comment>
<feature type="chain" id="PRO_0000136394" description="Phosphoribosyl-ATP pyrophosphatase">
    <location>
        <begin position="1"/>
        <end position="96"/>
    </location>
</feature>
<keyword id="KW-0028">Amino-acid biosynthesis</keyword>
<keyword id="KW-0067">ATP-binding</keyword>
<keyword id="KW-0963">Cytoplasm</keyword>
<keyword id="KW-0368">Histidine biosynthesis</keyword>
<keyword id="KW-0378">Hydrolase</keyword>
<keyword id="KW-0547">Nucleotide-binding</keyword>
<keyword id="KW-1185">Reference proteome</keyword>
<name>HIS2_METMP</name>
<gene>
    <name evidence="1" type="primary">hisE</name>
    <name type="ordered locus">MMP0051</name>
</gene>
<protein>
    <recommendedName>
        <fullName evidence="1">Phosphoribosyl-ATP pyrophosphatase</fullName>
        <shortName evidence="1">PRA-PH</shortName>
        <ecNumber evidence="1">3.6.1.31</ecNumber>
    </recommendedName>
</protein>
<evidence type="ECO:0000255" key="1">
    <source>
        <dbReference type="HAMAP-Rule" id="MF_01020"/>
    </source>
</evidence>